<protein>
    <recommendedName>
        <fullName>D-serine dehydratase</fullName>
        <ecNumber evidence="2">4.3.1.18</ecNumber>
    </recommendedName>
    <alternativeName>
        <fullName>D-serine deaminase</fullName>
        <shortName>DSD</shortName>
    </alternativeName>
</protein>
<reference key="1">
    <citation type="journal article" date="2002" name="Nature">
        <title>The genome sequence of Schizosaccharomyces pombe.</title>
        <authorList>
            <person name="Wood V."/>
            <person name="Gwilliam R."/>
            <person name="Rajandream M.A."/>
            <person name="Lyne M.H."/>
            <person name="Lyne R."/>
            <person name="Stewart A."/>
            <person name="Sgouros J.G."/>
            <person name="Peat N."/>
            <person name="Hayles J."/>
            <person name="Baker S.G."/>
            <person name="Basham D."/>
            <person name="Bowman S."/>
            <person name="Brooks K."/>
            <person name="Brown D."/>
            <person name="Brown S."/>
            <person name="Chillingworth T."/>
            <person name="Churcher C.M."/>
            <person name="Collins M."/>
            <person name="Connor R."/>
            <person name="Cronin A."/>
            <person name="Davis P."/>
            <person name="Feltwell T."/>
            <person name="Fraser A."/>
            <person name="Gentles S."/>
            <person name="Goble A."/>
            <person name="Hamlin N."/>
            <person name="Harris D.E."/>
            <person name="Hidalgo J."/>
            <person name="Hodgson G."/>
            <person name="Holroyd S."/>
            <person name="Hornsby T."/>
            <person name="Howarth S."/>
            <person name="Huckle E.J."/>
            <person name="Hunt S."/>
            <person name="Jagels K."/>
            <person name="James K.D."/>
            <person name="Jones L."/>
            <person name="Jones M."/>
            <person name="Leather S."/>
            <person name="McDonald S."/>
            <person name="McLean J."/>
            <person name="Mooney P."/>
            <person name="Moule S."/>
            <person name="Mungall K.L."/>
            <person name="Murphy L.D."/>
            <person name="Niblett D."/>
            <person name="Odell C."/>
            <person name="Oliver K."/>
            <person name="O'Neil S."/>
            <person name="Pearson D."/>
            <person name="Quail M.A."/>
            <person name="Rabbinowitsch E."/>
            <person name="Rutherford K.M."/>
            <person name="Rutter S."/>
            <person name="Saunders D."/>
            <person name="Seeger K."/>
            <person name="Sharp S."/>
            <person name="Skelton J."/>
            <person name="Simmonds M.N."/>
            <person name="Squares R."/>
            <person name="Squares S."/>
            <person name="Stevens K."/>
            <person name="Taylor K."/>
            <person name="Taylor R.G."/>
            <person name="Tivey A."/>
            <person name="Walsh S.V."/>
            <person name="Warren T."/>
            <person name="Whitehead S."/>
            <person name="Woodward J.R."/>
            <person name="Volckaert G."/>
            <person name="Aert R."/>
            <person name="Robben J."/>
            <person name="Grymonprez B."/>
            <person name="Weltjens I."/>
            <person name="Vanstreels E."/>
            <person name="Rieger M."/>
            <person name="Schaefer M."/>
            <person name="Mueller-Auer S."/>
            <person name="Gabel C."/>
            <person name="Fuchs M."/>
            <person name="Duesterhoeft A."/>
            <person name="Fritzc C."/>
            <person name="Holzer E."/>
            <person name="Moestl D."/>
            <person name="Hilbert H."/>
            <person name="Borzym K."/>
            <person name="Langer I."/>
            <person name="Beck A."/>
            <person name="Lehrach H."/>
            <person name="Reinhardt R."/>
            <person name="Pohl T.M."/>
            <person name="Eger P."/>
            <person name="Zimmermann W."/>
            <person name="Wedler H."/>
            <person name="Wambutt R."/>
            <person name="Purnelle B."/>
            <person name="Goffeau A."/>
            <person name="Cadieu E."/>
            <person name="Dreano S."/>
            <person name="Gloux S."/>
            <person name="Lelaure V."/>
            <person name="Mottier S."/>
            <person name="Galibert F."/>
            <person name="Aves S.J."/>
            <person name="Xiang Z."/>
            <person name="Hunt C."/>
            <person name="Moore K."/>
            <person name="Hurst S.M."/>
            <person name="Lucas M."/>
            <person name="Rochet M."/>
            <person name="Gaillardin C."/>
            <person name="Tallada V.A."/>
            <person name="Garzon A."/>
            <person name="Thode G."/>
            <person name="Daga R.R."/>
            <person name="Cruzado L."/>
            <person name="Jimenez J."/>
            <person name="Sanchez M."/>
            <person name="del Rey F."/>
            <person name="Benito J."/>
            <person name="Dominguez A."/>
            <person name="Revuelta J.L."/>
            <person name="Moreno S."/>
            <person name="Armstrong J."/>
            <person name="Forsburg S.L."/>
            <person name="Cerutti L."/>
            <person name="Lowe T."/>
            <person name="McCombie W.R."/>
            <person name="Paulsen I."/>
            <person name="Potashkin J."/>
            <person name="Shpakovski G.V."/>
            <person name="Ussery D."/>
            <person name="Barrell B.G."/>
            <person name="Nurse P."/>
        </authorList>
    </citation>
    <scope>NUCLEOTIDE SEQUENCE [LARGE SCALE GENOMIC DNA]</scope>
    <source>
        <strain>972 / ATCC 24843</strain>
    </source>
</reference>
<reference key="2">
    <citation type="journal article" date="2006" name="Nat. Biotechnol.">
        <title>ORFeome cloning and global analysis of protein localization in the fission yeast Schizosaccharomyces pombe.</title>
        <authorList>
            <person name="Matsuyama A."/>
            <person name="Arai R."/>
            <person name="Yashiroda Y."/>
            <person name="Shirai A."/>
            <person name="Kamata A."/>
            <person name="Sekido S."/>
            <person name="Kobayashi Y."/>
            <person name="Hashimoto A."/>
            <person name="Hamamoto M."/>
            <person name="Hiraoka Y."/>
            <person name="Horinouchi S."/>
            <person name="Yoshida M."/>
        </authorList>
    </citation>
    <scope>SUBCELLULAR LOCATION [LARGE SCALE ANALYSIS]</scope>
</reference>
<feature type="chain" id="PRO_0000317093" description="D-serine dehydratase">
    <location>
        <begin position="1"/>
        <end position="415"/>
    </location>
</feature>
<feature type="binding site" evidence="1">
    <location>
        <position position="204"/>
    </location>
    <ligand>
        <name>pyridoxal 5'-phosphate</name>
        <dbReference type="ChEBI" id="CHEBI:597326"/>
    </ligand>
</feature>
<feature type="binding site" evidence="1">
    <location>
        <position position="211"/>
    </location>
    <ligand>
        <name>pyridoxal 5'-phosphate</name>
        <dbReference type="ChEBI" id="CHEBI:597326"/>
    </ligand>
</feature>
<feature type="binding site" evidence="1">
    <location>
        <position position="253"/>
    </location>
    <ligand>
        <name>pyridoxal 5'-phosphate</name>
        <dbReference type="ChEBI" id="CHEBI:597326"/>
    </ligand>
</feature>
<feature type="binding site" evidence="1">
    <location>
        <position position="279"/>
    </location>
    <ligand>
        <name>pyridoxal 5'-phosphate</name>
        <dbReference type="ChEBI" id="CHEBI:597326"/>
    </ligand>
</feature>
<feature type="binding site" evidence="1">
    <location>
        <position position="280"/>
    </location>
    <ligand>
        <name>pyridoxal 5'-phosphate</name>
        <dbReference type="ChEBI" id="CHEBI:597326"/>
    </ligand>
</feature>
<feature type="binding site" evidence="1">
    <location>
        <position position="385"/>
    </location>
    <ligand>
        <name>Zn(2+)</name>
        <dbReference type="ChEBI" id="CHEBI:29105"/>
        <note>catalytic</note>
    </ligand>
</feature>
<feature type="binding site" evidence="1">
    <location>
        <position position="387"/>
    </location>
    <ligand>
        <name>Zn(2+)</name>
        <dbReference type="ChEBI" id="CHEBI:29105"/>
        <note>catalytic</note>
    </ligand>
</feature>
<feature type="modified residue" description="N6-(pyridoxal phosphate)lysine" evidence="1">
    <location>
        <position position="68"/>
    </location>
</feature>
<proteinExistence type="inferred from homology"/>
<keyword id="KW-0963">Cytoplasm</keyword>
<keyword id="KW-0216">Detoxification</keyword>
<keyword id="KW-0456">Lyase</keyword>
<keyword id="KW-0479">Metal-binding</keyword>
<keyword id="KW-0539">Nucleus</keyword>
<keyword id="KW-0663">Pyridoxal phosphate</keyword>
<keyword id="KW-1185">Reference proteome</keyword>
<keyword id="KW-0862">Zinc</keyword>
<evidence type="ECO:0000250" key="1">
    <source>
        <dbReference type="UniProtKB" id="A0A8V1ABE9"/>
    </source>
</evidence>
<evidence type="ECO:0000250" key="2">
    <source>
        <dbReference type="UniProtKB" id="P53095"/>
    </source>
</evidence>
<evidence type="ECO:0000269" key="3">
    <source>
    </source>
</evidence>
<evidence type="ECO:0000305" key="4"/>
<organism>
    <name type="scientific">Schizosaccharomyces pombe (strain 972 / ATCC 24843)</name>
    <name type="common">Fission yeast</name>
    <dbReference type="NCBI Taxonomy" id="284812"/>
    <lineage>
        <taxon>Eukaryota</taxon>
        <taxon>Fungi</taxon>
        <taxon>Dikarya</taxon>
        <taxon>Ascomycota</taxon>
        <taxon>Taphrinomycotina</taxon>
        <taxon>Schizosaccharomycetes</taxon>
        <taxon>Schizosaccharomycetales</taxon>
        <taxon>Schizosaccharomycetaceae</taxon>
        <taxon>Schizosaccharomyces</taxon>
    </lineage>
</organism>
<sequence>MASNVDKFSSRFYLNVNKEELKKEYVGKTIQQVPTPGFVIDEAIFEKNCNRMLDRASDIGVTFRAHVKTHKTIEGTLLQLGDGRTKAVVVSTLMEGFSLIPLILEGKIDDLLYGLPVAKSRLPELYELSKIVPHLRLMIDNPKQLDILREFTSTLPDDAKPWSIFVKIDMGTHRAGVTNDSQVVKDLISTILSDKSLFDLFGFYCHAGHSYASRSIDAASEFLCAEIDAANTAAKFATSIDPSLKLTLSVGATPTAHSVSPKVKELLPTLSGKLEVHAGNYPMNDVQQMITKCISQADVADYVFAEVISNYPGRNGEPGEVLVNAGVIAMSRETSPEGDFGIVITPGFESFYVDRLSQEHGILKSKDPKATLPDASQVLCIIPNHSCITAAAFPWYYITKGSDVITDIWVPWKGW</sequence>
<accession>Q9US35</accession>
<name>DSD1_SCHPO</name>
<comment type="function">
    <text evidence="2">Catalyzes the conversion of D-serine to pyruvate and ammonia. May play a role in D-serine detoxification.</text>
</comment>
<comment type="catalytic activity">
    <reaction evidence="2">
        <text>D-serine = pyruvate + NH4(+)</text>
        <dbReference type="Rhea" id="RHEA:13977"/>
        <dbReference type="ChEBI" id="CHEBI:15361"/>
        <dbReference type="ChEBI" id="CHEBI:28938"/>
        <dbReference type="ChEBI" id="CHEBI:35247"/>
        <dbReference type="EC" id="4.3.1.18"/>
    </reaction>
    <physiologicalReaction direction="left-to-right" evidence="2">
        <dbReference type="Rhea" id="RHEA:13978"/>
    </physiologicalReaction>
</comment>
<comment type="cofactor">
    <cofactor evidence="2">
        <name>pyridoxal 5'-phosphate</name>
        <dbReference type="ChEBI" id="CHEBI:597326"/>
    </cofactor>
</comment>
<comment type="cofactor">
    <cofactor evidence="2">
        <name>Zn(2+)</name>
        <dbReference type="ChEBI" id="CHEBI:29105"/>
    </cofactor>
</comment>
<comment type="subunit">
    <text evidence="2">Homodimer.</text>
</comment>
<comment type="subcellular location">
    <subcellularLocation>
        <location evidence="3">Cytoplasm</location>
    </subcellularLocation>
    <subcellularLocation>
        <location evidence="3">Nucleus</location>
    </subcellularLocation>
</comment>
<comment type="similarity">
    <text evidence="4">Belongs to the DSD1 family.</text>
</comment>
<gene>
    <name type="ORF">SPAC1039.06</name>
</gene>
<dbReference type="EC" id="4.3.1.18" evidence="2"/>
<dbReference type="EMBL" id="CU329670">
    <property type="protein sequence ID" value="CAB63542.1"/>
    <property type="molecule type" value="Genomic_DNA"/>
</dbReference>
<dbReference type="PIR" id="T50056">
    <property type="entry name" value="T50056"/>
</dbReference>
<dbReference type="RefSeq" id="NP_594997.1">
    <property type="nucleotide sequence ID" value="NM_001020428.2"/>
</dbReference>
<dbReference type="SMR" id="Q9US35"/>
<dbReference type="BioGRID" id="279434">
    <property type="interactions" value="3"/>
</dbReference>
<dbReference type="FunCoup" id="Q9US35">
    <property type="interactions" value="36"/>
</dbReference>
<dbReference type="STRING" id="284812.Q9US35"/>
<dbReference type="iPTMnet" id="Q9US35"/>
<dbReference type="PaxDb" id="4896-SPAC1039.06.1"/>
<dbReference type="EnsemblFungi" id="SPAC1039.06.1">
    <property type="protein sequence ID" value="SPAC1039.06.1:pep"/>
    <property type="gene ID" value="SPAC1039.06"/>
</dbReference>
<dbReference type="KEGG" id="spo:2542996"/>
<dbReference type="PomBase" id="SPAC1039.06"/>
<dbReference type="VEuPathDB" id="FungiDB:SPAC1039.06"/>
<dbReference type="eggNOG" id="ENOG502QRZ0">
    <property type="taxonomic scope" value="Eukaryota"/>
</dbReference>
<dbReference type="HOGENOM" id="CLU_031639_0_0_1"/>
<dbReference type="InParanoid" id="Q9US35"/>
<dbReference type="OMA" id="WPRFYGW"/>
<dbReference type="PhylomeDB" id="Q9US35"/>
<dbReference type="PRO" id="PR:Q9US35"/>
<dbReference type="Proteomes" id="UP000002485">
    <property type="component" value="Chromosome I"/>
</dbReference>
<dbReference type="GO" id="GO:0005829">
    <property type="term" value="C:cytosol"/>
    <property type="evidence" value="ECO:0007005"/>
    <property type="project" value="PomBase"/>
</dbReference>
<dbReference type="GO" id="GO:0005634">
    <property type="term" value="C:nucleus"/>
    <property type="evidence" value="ECO:0007005"/>
    <property type="project" value="PomBase"/>
</dbReference>
<dbReference type="GO" id="GO:0008721">
    <property type="term" value="F:D-serine ammonia-lyase activity"/>
    <property type="evidence" value="ECO:0000318"/>
    <property type="project" value="GO_Central"/>
</dbReference>
<dbReference type="GO" id="GO:0046872">
    <property type="term" value="F:metal ion binding"/>
    <property type="evidence" value="ECO:0007669"/>
    <property type="project" value="UniProtKB-KW"/>
</dbReference>
<dbReference type="GO" id="GO:0036088">
    <property type="term" value="P:D-serine catabolic process"/>
    <property type="evidence" value="ECO:0000318"/>
    <property type="project" value="GO_Central"/>
</dbReference>
<dbReference type="GO" id="GO:0009636">
    <property type="term" value="P:response to toxic substance"/>
    <property type="evidence" value="ECO:0007669"/>
    <property type="project" value="UniProtKB-KW"/>
</dbReference>
<dbReference type="CDD" id="cd06817">
    <property type="entry name" value="PLPDE_III_DSD"/>
    <property type="match status" value="1"/>
</dbReference>
<dbReference type="FunFam" id="3.20.20.10:FF:000016">
    <property type="entry name" value="D-serine dehydratase"/>
    <property type="match status" value="1"/>
</dbReference>
<dbReference type="Gene3D" id="3.20.20.10">
    <property type="entry name" value="Alanine racemase"/>
    <property type="match status" value="1"/>
</dbReference>
<dbReference type="Gene3D" id="2.40.37.20">
    <property type="entry name" value="D-serine dehydratase-like domain"/>
    <property type="match status" value="1"/>
</dbReference>
<dbReference type="InterPro" id="IPR001608">
    <property type="entry name" value="Ala_racemase_N"/>
</dbReference>
<dbReference type="InterPro" id="IPR051466">
    <property type="entry name" value="D-amino_acid_metab_enzyme"/>
</dbReference>
<dbReference type="InterPro" id="IPR026956">
    <property type="entry name" value="D-ser_dehydrat-like_dom"/>
</dbReference>
<dbReference type="InterPro" id="IPR042208">
    <property type="entry name" value="D-ser_dehydrat-like_sf"/>
</dbReference>
<dbReference type="InterPro" id="IPR029066">
    <property type="entry name" value="PLP-binding_barrel"/>
</dbReference>
<dbReference type="PANTHER" id="PTHR28004:SF2">
    <property type="entry name" value="D-SERINE DEHYDRATASE"/>
    <property type="match status" value="1"/>
</dbReference>
<dbReference type="PANTHER" id="PTHR28004">
    <property type="entry name" value="ZGC:162816-RELATED"/>
    <property type="match status" value="1"/>
</dbReference>
<dbReference type="Pfam" id="PF01168">
    <property type="entry name" value="Ala_racemase_N"/>
    <property type="match status" value="1"/>
</dbReference>
<dbReference type="Pfam" id="PF14031">
    <property type="entry name" value="D-ser_dehydrat"/>
    <property type="match status" value="1"/>
</dbReference>
<dbReference type="SMART" id="SM01119">
    <property type="entry name" value="D-ser_dehydrat"/>
    <property type="match status" value="1"/>
</dbReference>
<dbReference type="SUPFAM" id="SSF51419">
    <property type="entry name" value="PLP-binding barrel"/>
    <property type="match status" value="1"/>
</dbReference>